<accession>A1KB24</accession>
<comment type="function">
    <text evidence="1">One of the primary rRNA binding proteins. Required for association of the 30S and 50S subunits to form the 70S ribosome, for tRNA binding and peptide bond formation. It has been suggested to have peptidyltransferase activity; this is somewhat controversial. Makes several contacts with the 16S rRNA in the 70S ribosome.</text>
</comment>
<comment type="subunit">
    <text evidence="1">Part of the 50S ribosomal subunit. Forms a bridge to the 30S subunit in the 70S ribosome.</text>
</comment>
<comment type="similarity">
    <text evidence="1">Belongs to the universal ribosomal protein uL2 family.</text>
</comment>
<evidence type="ECO:0000255" key="1">
    <source>
        <dbReference type="HAMAP-Rule" id="MF_01320"/>
    </source>
</evidence>
<evidence type="ECO:0000256" key="2">
    <source>
        <dbReference type="SAM" id="MobiDB-lite"/>
    </source>
</evidence>
<evidence type="ECO:0000305" key="3"/>
<organism>
    <name type="scientific">Azoarcus sp. (strain BH72)</name>
    <dbReference type="NCBI Taxonomy" id="418699"/>
    <lineage>
        <taxon>Bacteria</taxon>
        <taxon>Pseudomonadati</taxon>
        <taxon>Pseudomonadota</taxon>
        <taxon>Betaproteobacteria</taxon>
        <taxon>Rhodocyclales</taxon>
        <taxon>Zoogloeaceae</taxon>
        <taxon>Azoarcus</taxon>
    </lineage>
</organism>
<name>RL2_AZOSB</name>
<feature type="chain" id="PRO_0000309869" description="Large ribosomal subunit protein uL2">
    <location>
        <begin position="1"/>
        <end position="275"/>
    </location>
</feature>
<feature type="region of interest" description="Disordered" evidence="2">
    <location>
        <begin position="24"/>
        <end position="54"/>
    </location>
</feature>
<feature type="region of interest" description="Disordered" evidence="2">
    <location>
        <begin position="223"/>
        <end position="275"/>
    </location>
</feature>
<feature type="compositionally biased region" description="Basic and acidic residues" evidence="2">
    <location>
        <begin position="25"/>
        <end position="38"/>
    </location>
</feature>
<feature type="compositionally biased region" description="Basic and acidic residues" evidence="2">
    <location>
        <begin position="229"/>
        <end position="241"/>
    </location>
</feature>
<dbReference type="EMBL" id="AM406670">
    <property type="protein sequence ID" value="CAL96030.1"/>
    <property type="molecule type" value="Genomic_DNA"/>
</dbReference>
<dbReference type="RefSeq" id="WP_011767137.1">
    <property type="nucleotide sequence ID" value="NC_008702.1"/>
</dbReference>
<dbReference type="SMR" id="A1KB24"/>
<dbReference type="STRING" id="62928.azo3414"/>
<dbReference type="KEGG" id="aoa:dqs_3553"/>
<dbReference type="KEGG" id="azo:azo3414"/>
<dbReference type="eggNOG" id="COG0090">
    <property type="taxonomic scope" value="Bacteria"/>
</dbReference>
<dbReference type="HOGENOM" id="CLU_036235_2_1_4"/>
<dbReference type="OrthoDB" id="9778722at2"/>
<dbReference type="Proteomes" id="UP000002588">
    <property type="component" value="Chromosome"/>
</dbReference>
<dbReference type="GO" id="GO:0015934">
    <property type="term" value="C:large ribosomal subunit"/>
    <property type="evidence" value="ECO:0007669"/>
    <property type="project" value="InterPro"/>
</dbReference>
<dbReference type="GO" id="GO:0019843">
    <property type="term" value="F:rRNA binding"/>
    <property type="evidence" value="ECO:0007669"/>
    <property type="project" value="UniProtKB-UniRule"/>
</dbReference>
<dbReference type="GO" id="GO:0003735">
    <property type="term" value="F:structural constituent of ribosome"/>
    <property type="evidence" value="ECO:0007669"/>
    <property type="project" value="InterPro"/>
</dbReference>
<dbReference type="GO" id="GO:0016740">
    <property type="term" value="F:transferase activity"/>
    <property type="evidence" value="ECO:0007669"/>
    <property type="project" value="InterPro"/>
</dbReference>
<dbReference type="GO" id="GO:0002181">
    <property type="term" value="P:cytoplasmic translation"/>
    <property type="evidence" value="ECO:0007669"/>
    <property type="project" value="TreeGrafter"/>
</dbReference>
<dbReference type="FunFam" id="2.30.30.30:FF:000001">
    <property type="entry name" value="50S ribosomal protein L2"/>
    <property type="match status" value="1"/>
</dbReference>
<dbReference type="FunFam" id="2.40.50.140:FF:000003">
    <property type="entry name" value="50S ribosomal protein L2"/>
    <property type="match status" value="1"/>
</dbReference>
<dbReference type="FunFam" id="4.10.950.10:FF:000001">
    <property type="entry name" value="50S ribosomal protein L2"/>
    <property type="match status" value="1"/>
</dbReference>
<dbReference type="Gene3D" id="2.30.30.30">
    <property type="match status" value="1"/>
</dbReference>
<dbReference type="Gene3D" id="2.40.50.140">
    <property type="entry name" value="Nucleic acid-binding proteins"/>
    <property type="match status" value="1"/>
</dbReference>
<dbReference type="Gene3D" id="4.10.950.10">
    <property type="entry name" value="Ribosomal protein L2, domain 3"/>
    <property type="match status" value="1"/>
</dbReference>
<dbReference type="HAMAP" id="MF_01320_B">
    <property type="entry name" value="Ribosomal_uL2_B"/>
    <property type="match status" value="1"/>
</dbReference>
<dbReference type="InterPro" id="IPR012340">
    <property type="entry name" value="NA-bd_OB-fold"/>
</dbReference>
<dbReference type="InterPro" id="IPR014722">
    <property type="entry name" value="Rib_uL2_dom2"/>
</dbReference>
<dbReference type="InterPro" id="IPR002171">
    <property type="entry name" value="Ribosomal_uL2"/>
</dbReference>
<dbReference type="InterPro" id="IPR005880">
    <property type="entry name" value="Ribosomal_uL2_bac/org-type"/>
</dbReference>
<dbReference type="InterPro" id="IPR022669">
    <property type="entry name" value="Ribosomal_uL2_C"/>
</dbReference>
<dbReference type="InterPro" id="IPR022671">
    <property type="entry name" value="Ribosomal_uL2_CS"/>
</dbReference>
<dbReference type="InterPro" id="IPR014726">
    <property type="entry name" value="Ribosomal_uL2_dom3"/>
</dbReference>
<dbReference type="InterPro" id="IPR022666">
    <property type="entry name" value="Ribosomal_uL2_RNA-bd_dom"/>
</dbReference>
<dbReference type="InterPro" id="IPR008991">
    <property type="entry name" value="Translation_prot_SH3-like_sf"/>
</dbReference>
<dbReference type="NCBIfam" id="TIGR01171">
    <property type="entry name" value="rplB_bact"/>
    <property type="match status" value="1"/>
</dbReference>
<dbReference type="PANTHER" id="PTHR13691:SF5">
    <property type="entry name" value="LARGE RIBOSOMAL SUBUNIT PROTEIN UL2M"/>
    <property type="match status" value="1"/>
</dbReference>
<dbReference type="PANTHER" id="PTHR13691">
    <property type="entry name" value="RIBOSOMAL PROTEIN L2"/>
    <property type="match status" value="1"/>
</dbReference>
<dbReference type="Pfam" id="PF00181">
    <property type="entry name" value="Ribosomal_L2"/>
    <property type="match status" value="1"/>
</dbReference>
<dbReference type="Pfam" id="PF03947">
    <property type="entry name" value="Ribosomal_L2_C"/>
    <property type="match status" value="1"/>
</dbReference>
<dbReference type="PIRSF" id="PIRSF002158">
    <property type="entry name" value="Ribosomal_L2"/>
    <property type="match status" value="1"/>
</dbReference>
<dbReference type="SMART" id="SM01383">
    <property type="entry name" value="Ribosomal_L2"/>
    <property type="match status" value="1"/>
</dbReference>
<dbReference type="SMART" id="SM01382">
    <property type="entry name" value="Ribosomal_L2_C"/>
    <property type="match status" value="1"/>
</dbReference>
<dbReference type="SUPFAM" id="SSF50249">
    <property type="entry name" value="Nucleic acid-binding proteins"/>
    <property type="match status" value="1"/>
</dbReference>
<dbReference type="SUPFAM" id="SSF50104">
    <property type="entry name" value="Translation proteins SH3-like domain"/>
    <property type="match status" value="1"/>
</dbReference>
<dbReference type="PROSITE" id="PS00467">
    <property type="entry name" value="RIBOSOMAL_L2"/>
    <property type="match status" value="1"/>
</dbReference>
<reference key="1">
    <citation type="journal article" date="2006" name="Nat. Biotechnol.">
        <title>Complete genome of the mutualistic, N2-fixing grass endophyte Azoarcus sp. strain BH72.</title>
        <authorList>
            <person name="Krause A."/>
            <person name="Ramakumar A."/>
            <person name="Bartels D."/>
            <person name="Battistoni F."/>
            <person name="Bekel T."/>
            <person name="Boch J."/>
            <person name="Boehm M."/>
            <person name="Friedrich F."/>
            <person name="Hurek T."/>
            <person name="Krause L."/>
            <person name="Linke B."/>
            <person name="McHardy A.C."/>
            <person name="Sarkar A."/>
            <person name="Schneiker S."/>
            <person name="Syed A.A."/>
            <person name="Thauer R."/>
            <person name="Vorhoelter F.-J."/>
            <person name="Weidner S."/>
            <person name="Puehler A."/>
            <person name="Reinhold-Hurek B."/>
            <person name="Kaiser O."/>
            <person name="Goesmann A."/>
        </authorList>
    </citation>
    <scope>NUCLEOTIDE SEQUENCE [LARGE SCALE GENOMIC DNA]</scope>
    <source>
        <strain>BH72</strain>
    </source>
</reference>
<keyword id="KW-1185">Reference proteome</keyword>
<keyword id="KW-0687">Ribonucleoprotein</keyword>
<keyword id="KW-0689">Ribosomal protein</keyword>
<keyword id="KW-0694">RNA-binding</keyword>
<keyword id="KW-0699">rRNA-binding</keyword>
<sequence length="275" mass="30241">MALVKLKPTSAGRRGMVKVVNPDLYKGRPHDALTEKKTSKAGRNNSGRVTVRHQGGGHKMHYRVIDFRRNKDGIAAKVERIEYDPNRSANIALLCYADGERRYIIAPRGVEVGQQLMSGAEAPIKAGNALPIRNIPVGSTIHCVEMMPGKGAQIARAAGTSVQLLAREGAYAQLRLRSGEIRRVHVECRATIGEVGNEEHSLRKIGKAGANRWRGIRPTVRGVAMNPVDHPHGGGEGRTGEGRVPVSPWGTPAKGYRTRRNKRTDNMIVQRRHKR</sequence>
<proteinExistence type="inferred from homology"/>
<gene>
    <name evidence="1" type="primary">rplB</name>
    <name type="ordered locus">azo3414</name>
</gene>
<protein>
    <recommendedName>
        <fullName evidence="1">Large ribosomal subunit protein uL2</fullName>
    </recommendedName>
    <alternativeName>
        <fullName evidence="3">50S ribosomal protein L2</fullName>
    </alternativeName>
</protein>